<organism>
    <name type="scientific">Bacillus subtilis (strain 168)</name>
    <dbReference type="NCBI Taxonomy" id="224308"/>
    <lineage>
        <taxon>Bacteria</taxon>
        <taxon>Bacillati</taxon>
        <taxon>Bacillota</taxon>
        <taxon>Bacilli</taxon>
        <taxon>Bacillales</taxon>
        <taxon>Bacillaceae</taxon>
        <taxon>Bacillus</taxon>
    </lineage>
</organism>
<proteinExistence type="inferred from homology"/>
<reference key="1">
    <citation type="journal article" date="1994" name="J. Bacteriol.">
        <title>Identification of two distinct Bacillus subtilis citrate synthase genes.</title>
        <authorList>
            <person name="Jin S."/>
            <person name="Sonenshein A.L."/>
        </authorList>
    </citation>
    <scope>NUCLEOTIDE SEQUENCE [GENOMIC DNA]</scope>
    <source>
        <strain>168 / SMY</strain>
    </source>
</reference>
<reference key="2">
    <citation type="journal article" date="1998" name="Microbiology">
        <title>The 172 kb prkA-addAB region from 83 degrees to 97 degrees of the Bacillus subtilis chromosome contains several dysfunctional genes, the glyB marker, many genes encoding transporter proteins, and the ubiquitous hit gene.</title>
        <authorList>
            <person name="Noback M.A."/>
            <person name="Holsappel S."/>
            <person name="Kiewiet R."/>
            <person name="Terpstra P."/>
            <person name="Wambutt R."/>
            <person name="Wedler H."/>
            <person name="Venema G."/>
            <person name="Bron S."/>
        </authorList>
    </citation>
    <scope>NUCLEOTIDE SEQUENCE [GENOMIC DNA]</scope>
    <source>
        <strain>168</strain>
    </source>
</reference>
<reference key="3">
    <citation type="journal article" date="1997" name="Nature">
        <title>The complete genome sequence of the Gram-positive bacterium Bacillus subtilis.</title>
        <authorList>
            <person name="Kunst F."/>
            <person name="Ogasawara N."/>
            <person name="Moszer I."/>
            <person name="Albertini A.M."/>
            <person name="Alloni G."/>
            <person name="Azevedo V."/>
            <person name="Bertero M.G."/>
            <person name="Bessieres P."/>
            <person name="Bolotin A."/>
            <person name="Borchert S."/>
            <person name="Borriss R."/>
            <person name="Boursier L."/>
            <person name="Brans A."/>
            <person name="Braun M."/>
            <person name="Brignell S.C."/>
            <person name="Bron S."/>
            <person name="Brouillet S."/>
            <person name="Bruschi C.V."/>
            <person name="Caldwell B."/>
            <person name="Capuano V."/>
            <person name="Carter N.M."/>
            <person name="Choi S.-K."/>
            <person name="Codani J.-J."/>
            <person name="Connerton I.F."/>
            <person name="Cummings N.J."/>
            <person name="Daniel R.A."/>
            <person name="Denizot F."/>
            <person name="Devine K.M."/>
            <person name="Duesterhoeft A."/>
            <person name="Ehrlich S.D."/>
            <person name="Emmerson P.T."/>
            <person name="Entian K.-D."/>
            <person name="Errington J."/>
            <person name="Fabret C."/>
            <person name="Ferrari E."/>
            <person name="Foulger D."/>
            <person name="Fritz C."/>
            <person name="Fujita M."/>
            <person name="Fujita Y."/>
            <person name="Fuma S."/>
            <person name="Galizzi A."/>
            <person name="Galleron N."/>
            <person name="Ghim S.-Y."/>
            <person name="Glaser P."/>
            <person name="Goffeau A."/>
            <person name="Golightly E.J."/>
            <person name="Grandi G."/>
            <person name="Guiseppi G."/>
            <person name="Guy B.J."/>
            <person name="Haga K."/>
            <person name="Haiech J."/>
            <person name="Harwood C.R."/>
            <person name="Henaut A."/>
            <person name="Hilbert H."/>
            <person name="Holsappel S."/>
            <person name="Hosono S."/>
            <person name="Hullo M.-F."/>
            <person name="Itaya M."/>
            <person name="Jones L.-M."/>
            <person name="Joris B."/>
            <person name="Karamata D."/>
            <person name="Kasahara Y."/>
            <person name="Klaerr-Blanchard M."/>
            <person name="Klein C."/>
            <person name="Kobayashi Y."/>
            <person name="Koetter P."/>
            <person name="Koningstein G."/>
            <person name="Krogh S."/>
            <person name="Kumano M."/>
            <person name="Kurita K."/>
            <person name="Lapidus A."/>
            <person name="Lardinois S."/>
            <person name="Lauber J."/>
            <person name="Lazarevic V."/>
            <person name="Lee S.-M."/>
            <person name="Levine A."/>
            <person name="Liu H."/>
            <person name="Masuda S."/>
            <person name="Mauel C."/>
            <person name="Medigue C."/>
            <person name="Medina N."/>
            <person name="Mellado R.P."/>
            <person name="Mizuno M."/>
            <person name="Moestl D."/>
            <person name="Nakai S."/>
            <person name="Noback M."/>
            <person name="Noone D."/>
            <person name="O'Reilly M."/>
            <person name="Ogawa K."/>
            <person name="Ogiwara A."/>
            <person name="Oudega B."/>
            <person name="Park S.-H."/>
            <person name="Parro V."/>
            <person name="Pohl T.M."/>
            <person name="Portetelle D."/>
            <person name="Porwollik S."/>
            <person name="Prescott A.M."/>
            <person name="Presecan E."/>
            <person name="Pujic P."/>
            <person name="Purnelle B."/>
            <person name="Rapoport G."/>
            <person name="Rey M."/>
            <person name="Reynolds S."/>
            <person name="Rieger M."/>
            <person name="Rivolta C."/>
            <person name="Rocha E."/>
            <person name="Roche B."/>
            <person name="Rose M."/>
            <person name="Sadaie Y."/>
            <person name="Sato T."/>
            <person name="Scanlan E."/>
            <person name="Schleich S."/>
            <person name="Schroeter R."/>
            <person name="Scoffone F."/>
            <person name="Sekiguchi J."/>
            <person name="Sekowska A."/>
            <person name="Seror S.J."/>
            <person name="Serror P."/>
            <person name="Shin B.-S."/>
            <person name="Soldo B."/>
            <person name="Sorokin A."/>
            <person name="Tacconi E."/>
            <person name="Takagi T."/>
            <person name="Takahashi H."/>
            <person name="Takemaru K."/>
            <person name="Takeuchi M."/>
            <person name="Tamakoshi A."/>
            <person name="Tanaka T."/>
            <person name="Terpstra P."/>
            <person name="Tognoni A."/>
            <person name="Tosato V."/>
            <person name="Uchiyama S."/>
            <person name="Vandenbol M."/>
            <person name="Vannier F."/>
            <person name="Vassarotti A."/>
            <person name="Viari A."/>
            <person name="Wambutt R."/>
            <person name="Wedler E."/>
            <person name="Wedler H."/>
            <person name="Weitzenegger T."/>
            <person name="Winters P."/>
            <person name="Wipat A."/>
            <person name="Yamamoto H."/>
            <person name="Yamane K."/>
            <person name="Yasumoto K."/>
            <person name="Yata K."/>
            <person name="Yoshida K."/>
            <person name="Yoshikawa H.-F."/>
            <person name="Zumstein E."/>
            <person name="Yoshikawa H."/>
            <person name="Danchin A."/>
        </authorList>
    </citation>
    <scope>NUCLEOTIDE SEQUENCE [LARGE SCALE GENOMIC DNA]</scope>
    <source>
        <strain>168</strain>
    </source>
</reference>
<reference key="4">
    <citation type="journal article" date="2009" name="Microbiology">
        <title>From a consortium sequence to a unified sequence: the Bacillus subtilis 168 reference genome a decade later.</title>
        <authorList>
            <person name="Barbe V."/>
            <person name="Cruveiller S."/>
            <person name="Kunst F."/>
            <person name="Lenoble P."/>
            <person name="Meurice G."/>
            <person name="Sekowska A."/>
            <person name="Vallenet D."/>
            <person name="Wang T."/>
            <person name="Moszer I."/>
            <person name="Medigue C."/>
            <person name="Danchin A."/>
        </authorList>
    </citation>
    <scope>SEQUENCE REVISION TO 46-50 AND 268-291</scope>
</reference>
<reference key="5">
    <citation type="journal article" date="1994" name="J. Bacteriol.">
        <title>Transcriptional regulation of Bacillus subtilis citrate synthase genes.</title>
        <authorList>
            <person name="Jin S."/>
            <person name="Sonenshein A.L."/>
        </authorList>
    </citation>
    <scope>FUNCTION</scope>
</reference>
<keyword id="KW-0963">Cytoplasm</keyword>
<keyword id="KW-0238">DNA-binding</keyword>
<keyword id="KW-1185">Reference proteome</keyword>
<keyword id="KW-0678">Repressor</keyword>
<keyword id="KW-0804">Transcription</keyword>
<keyword id="KW-0805">Transcription regulation</keyword>
<comment type="function">
    <text evidence="2">Negative regulatory protein for the citA gene for citrate synthase I.</text>
</comment>
<comment type="subcellular location">
    <subcellularLocation>
        <location>Cytoplasm</location>
    </subcellularLocation>
</comment>
<comment type="similarity">
    <text evidence="3">Belongs to the LysR transcriptional regulatory family.</text>
</comment>
<gene>
    <name type="primary">citR</name>
    <name type="ordered locus">BSU09430</name>
</gene>
<accession>P39127</accession>
<feature type="chain" id="PRO_0000105610" description="HTH-type transcriptional regulator CitR">
    <location>
        <begin position="1"/>
        <end position="291"/>
    </location>
</feature>
<feature type="domain" description="HTH lysR-type" evidence="1">
    <location>
        <begin position="1"/>
        <end position="58"/>
    </location>
</feature>
<feature type="DNA-binding region" description="H-T-H motif" evidence="1">
    <location>
        <begin position="18"/>
        <end position="37"/>
    </location>
</feature>
<feature type="sequence conflict" description="In Ref. 1; AAA20935 and 2; CAA74488." evidence="3" ref="1 2">
    <original>KLFER</original>
    <variation>NVFDV</variation>
    <location>
        <begin position="46"/>
        <end position="50"/>
    </location>
</feature>
<feature type="sequence conflict" description="In Ref. 1; AAA20935 and 2; CAA74488." evidence="3" ref="1 2">
    <original>AYAIALYENKKEKKFLDFLSHFHF</original>
    <variation>LTRLPFMKIRKKKSSWIFYHIFIFRSNQNACAPSNEKNPFQ</variation>
    <location>
        <begin position="268"/>
        <end position="291"/>
    </location>
</feature>
<protein>
    <recommendedName>
        <fullName>HTH-type transcriptional regulator CitR</fullName>
    </recommendedName>
    <alternativeName>
        <fullName>Citrate synthase I repressor</fullName>
    </alternativeName>
</protein>
<evidence type="ECO:0000255" key="1">
    <source>
        <dbReference type="PROSITE-ProRule" id="PRU00253"/>
    </source>
</evidence>
<evidence type="ECO:0000269" key="2">
    <source>
    </source>
</evidence>
<evidence type="ECO:0000305" key="3"/>
<sequence length="291" mass="33667">MDFKWLHTFVTAAKYENFRKTAETLFLSQPTVTVHIKQLEKEISCKLFERKGRQIQLTDEGRAYLPYALRLLDDYENSMAELHRVRQGYSQTLQLAVSPLIADTVLPSVMKRYTAMNTETEMAVTIFESAEIASLIKAGEADIGLSCLKVQSSSLSCHCLYKDPVVLVAPPDKRFIEDNEIDAKEVLEQYLLLTHNHPDYWDDLLRQVRMTFPFVRTMKVTQTHITKRFIKEGLGVSFLPLSTVKRELAEKQMIRIPYQSVQLPYAGAYAIALYENKKEKKFLDFLSHFHF</sequence>
<name>CITR_BACSU</name>
<dbReference type="EMBL" id="U05256">
    <property type="protein sequence ID" value="AAA20935.1"/>
    <property type="molecule type" value="Genomic_DNA"/>
</dbReference>
<dbReference type="EMBL" id="Y14082">
    <property type="protein sequence ID" value="CAA74488.1"/>
    <property type="molecule type" value="Genomic_DNA"/>
</dbReference>
<dbReference type="EMBL" id="AL009126">
    <property type="protein sequence ID" value="CAB12782.2"/>
    <property type="molecule type" value="Genomic_DNA"/>
</dbReference>
<dbReference type="PIR" id="I40379">
    <property type="entry name" value="I40379"/>
</dbReference>
<dbReference type="RefSeq" id="NP_388824.2">
    <property type="nucleotide sequence ID" value="NC_000964.3"/>
</dbReference>
<dbReference type="RefSeq" id="WP_003233357.1">
    <property type="nucleotide sequence ID" value="NZ_OZ025638.1"/>
</dbReference>
<dbReference type="SMR" id="P39127"/>
<dbReference type="FunCoup" id="P39127">
    <property type="interactions" value="56"/>
</dbReference>
<dbReference type="STRING" id="224308.BSU09430"/>
<dbReference type="PaxDb" id="224308-BSU09430"/>
<dbReference type="EnsemblBacteria" id="CAB12782">
    <property type="protein sequence ID" value="CAB12782"/>
    <property type="gene ID" value="BSU_09430"/>
</dbReference>
<dbReference type="GeneID" id="939267"/>
<dbReference type="KEGG" id="bsu:BSU09430"/>
<dbReference type="PATRIC" id="fig|224308.179.peg.1016"/>
<dbReference type="eggNOG" id="COG0583">
    <property type="taxonomic scope" value="Bacteria"/>
</dbReference>
<dbReference type="InParanoid" id="P39127"/>
<dbReference type="OrthoDB" id="9803735at2"/>
<dbReference type="PhylomeDB" id="P39127"/>
<dbReference type="BioCyc" id="BSUB:BSU09430-MONOMER"/>
<dbReference type="Proteomes" id="UP000001570">
    <property type="component" value="Chromosome"/>
</dbReference>
<dbReference type="GO" id="GO:0005737">
    <property type="term" value="C:cytoplasm"/>
    <property type="evidence" value="ECO:0007669"/>
    <property type="project" value="UniProtKB-SubCell"/>
</dbReference>
<dbReference type="GO" id="GO:0003700">
    <property type="term" value="F:DNA-binding transcription factor activity"/>
    <property type="evidence" value="ECO:0007669"/>
    <property type="project" value="InterPro"/>
</dbReference>
<dbReference type="GO" id="GO:0000976">
    <property type="term" value="F:transcription cis-regulatory region binding"/>
    <property type="evidence" value="ECO:0000318"/>
    <property type="project" value="GO_Central"/>
</dbReference>
<dbReference type="GO" id="GO:0006355">
    <property type="term" value="P:regulation of DNA-templated transcription"/>
    <property type="evidence" value="ECO:0000318"/>
    <property type="project" value="GO_Central"/>
</dbReference>
<dbReference type="CDD" id="cd05466">
    <property type="entry name" value="PBP2_LTTR_substrate"/>
    <property type="match status" value="1"/>
</dbReference>
<dbReference type="FunFam" id="1.10.10.10:FF:000001">
    <property type="entry name" value="LysR family transcriptional regulator"/>
    <property type="match status" value="1"/>
</dbReference>
<dbReference type="Gene3D" id="3.40.190.10">
    <property type="entry name" value="Periplasmic binding protein-like II"/>
    <property type="match status" value="2"/>
</dbReference>
<dbReference type="Gene3D" id="1.10.10.10">
    <property type="entry name" value="Winged helix-like DNA-binding domain superfamily/Winged helix DNA-binding domain"/>
    <property type="match status" value="1"/>
</dbReference>
<dbReference type="InterPro" id="IPR005119">
    <property type="entry name" value="LysR_subst-bd"/>
</dbReference>
<dbReference type="InterPro" id="IPR000847">
    <property type="entry name" value="Tscrpt_reg_HTH_LysR"/>
</dbReference>
<dbReference type="InterPro" id="IPR036388">
    <property type="entry name" value="WH-like_DNA-bd_sf"/>
</dbReference>
<dbReference type="InterPro" id="IPR036390">
    <property type="entry name" value="WH_DNA-bd_sf"/>
</dbReference>
<dbReference type="PANTHER" id="PTHR30126">
    <property type="entry name" value="HTH-TYPE TRANSCRIPTIONAL REGULATOR"/>
    <property type="match status" value="1"/>
</dbReference>
<dbReference type="PANTHER" id="PTHR30126:SF64">
    <property type="entry name" value="HTH-TYPE TRANSCRIPTIONAL REGULATOR CITR"/>
    <property type="match status" value="1"/>
</dbReference>
<dbReference type="Pfam" id="PF00126">
    <property type="entry name" value="HTH_1"/>
    <property type="match status" value="1"/>
</dbReference>
<dbReference type="Pfam" id="PF03466">
    <property type="entry name" value="LysR_substrate"/>
    <property type="match status" value="1"/>
</dbReference>
<dbReference type="PRINTS" id="PR00039">
    <property type="entry name" value="HTHLYSR"/>
</dbReference>
<dbReference type="SUPFAM" id="SSF53850">
    <property type="entry name" value="Periplasmic binding protein-like II"/>
    <property type="match status" value="1"/>
</dbReference>
<dbReference type="SUPFAM" id="SSF46785">
    <property type="entry name" value="Winged helix' DNA-binding domain"/>
    <property type="match status" value="1"/>
</dbReference>
<dbReference type="PROSITE" id="PS50931">
    <property type="entry name" value="HTH_LYSR"/>
    <property type="match status" value="1"/>
</dbReference>